<comment type="function">
    <text evidence="1">Catalyzes the phosphorylation of the 3'-hydroxyl group of dephosphocoenzyme A to form coenzyme A.</text>
</comment>
<comment type="catalytic activity">
    <reaction evidence="1">
        <text>3'-dephospho-CoA + ATP = ADP + CoA + H(+)</text>
        <dbReference type="Rhea" id="RHEA:18245"/>
        <dbReference type="ChEBI" id="CHEBI:15378"/>
        <dbReference type="ChEBI" id="CHEBI:30616"/>
        <dbReference type="ChEBI" id="CHEBI:57287"/>
        <dbReference type="ChEBI" id="CHEBI:57328"/>
        <dbReference type="ChEBI" id="CHEBI:456216"/>
        <dbReference type="EC" id="2.7.1.24"/>
    </reaction>
</comment>
<comment type="pathway">
    <text evidence="1">Cofactor biosynthesis; coenzyme A biosynthesis; CoA from (R)-pantothenate: step 5/5.</text>
</comment>
<comment type="subcellular location">
    <subcellularLocation>
        <location evidence="1">Cytoplasm</location>
    </subcellularLocation>
</comment>
<comment type="similarity">
    <text evidence="1">Belongs to the CoaE family.</text>
</comment>
<comment type="sequence caution" evidence="2">
    <conflict type="erroneous initiation">
        <sequence resource="EMBL-CDS" id="BAC64601"/>
    </conflict>
</comment>
<name>COAE_STRPQ</name>
<keyword id="KW-0067">ATP-binding</keyword>
<keyword id="KW-0173">Coenzyme A biosynthesis</keyword>
<keyword id="KW-0963">Cytoplasm</keyword>
<keyword id="KW-0418">Kinase</keyword>
<keyword id="KW-0547">Nucleotide-binding</keyword>
<keyword id="KW-0808">Transferase</keyword>
<reference key="1">
    <citation type="journal article" date="2003" name="Genome Res.">
        <title>Genome sequence of an M3 strain of Streptococcus pyogenes reveals a large-scale genomic rearrangement in invasive strains and new insights into phage evolution.</title>
        <authorList>
            <person name="Nakagawa I."/>
            <person name="Kurokawa K."/>
            <person name="Yamashita A."/>
            <person name="Nakata M."/>
            <person name="Tomiyasu Y."/>
            <person name="Okahashi N."/>
            <person name="Kawabata S."/>
            <person name="Yamazaki K."/>
            <person name="Shiba T."/>
            <person name="Yasunaga T."/>
            <person name="Hayashi H."/>
            <person name="Hattori M."/>
            <person name="Hamada S."/>
        </authorList>
    </citation>
    <scope>NUCLEOTIDE SEQUENCE [LARGE SCALE GENOMIC DNA]</scope>
    <source>
        <strain>SSI-1</strain>
    </source>
</reference>
<feature type="chain" id="PRO_0000411310" description="Dephospho-CoA kinase">
    <location>
        <begin position="1"/>
        <end position="197"/>
    </location>
</feature>
<feature type="domain" description="DPCK" evidence="1">
    <location>
        <begin position="2"/>
        <end position="197"/>
    </location>
</feature>
<feature type="binding site" evidence="1">
    <location>
        <begin position="10"/>
        <end position="15"/>
    </location>
    <ligand>
        <name>ATP</name>
        <dbReference type="ChEBI" id="CHEBI:30616"/>
    </ligand>
</feature>
<dbReference type="EC" id="2.7.1.24" evidence="1"/>
<dbReference type="EMBL" id="BA000034">
    <property type="protein sequence ID" value="BAC64601.1"/>
    <property type="status" value="ALT_INIT"/>
    <property type="molecule type" value="Genomic_DNA"/>
</dbReference>
<dbReference type="RefSeq" id="WP_011017469.1">
    <property type="nucleotide sequence ID" value="NC_004606.1"/>
</dbReference>
<dbReference type="SMR" id="P0DA45"/>
<dbReference type="KEGG" id="sps:SPs1506"/>
<dbReference type="HOGENOM" id="CLU_057180_0_0_9"/>
<dbReference type="UniPathway" id="UPA00241">
    <property type="reaction ID" value="UER00356"/>
</dbReference>
<dbReference type="GO" id="GO:0005737">
    <property type="term" value="C:cytoplasm"/>
    <property type="evidence" value="ECO:0007669"/>
    <property type="project" value="UniProtKB-SubCell"/>
</dbReference>
<dbReference type="GO" id="GO:0005524">
    <property type="term" value="F:ATP binding"/>
    <property type="evidence" value="ECO:0007669"/>
    <property type="project" value="UniProtKB-UniRule"/>
</dbReference>
<dbReference type="GO" id="GO:0004140">
    <property type="term" value="F:dephospho-CoA kinase activity"/>
    <property type="evidence" value="ECO:0007669"/>
    <property type="project" value="UniProtKB-UniRule"/>
</dbReference>
<dbReference type="GO" id="GO:0015937">
    <property type="term" value="P:coenzyme A biosynthetic process"/>
    <property type="evidence" value="ECO:0007669"/>
    <property type="project" value="UniProtKB-UniRule"/>
</dbReference>
<dbReference type="CDD" id="cd02022">
    <property type="entry name" value="DPCK"/>
    <property type="match status" value="1"/>
</dbReference>
<dbReference type="FunFam" id="3.40.50.300:FF:000991">
    <property type="entry name" value="Dephospho-CoA kinase"/>
    <property type="match status" value="1"/>
</dbReference>
<dbReference type="Gene3D" id="3.40.50.300">
    <property type="entry name" value="P-loop containing nucleotide triphosphate hydrolases"/>
    <property type="match status" value="1"/>
</dbReference>
<dbReference type="HAMAP" id="MF_00376">
    <property type="entry name" value="Dephospho_CoA_kinase"/>
    <property type="match status" value="1"/>
</dbReference>
<dbReference type="InterPro" id="IPR001977">
    <property type="entry name" value="Depp_CoAkinase"/>
</dbReference>
<dbReference type="InterPro" id="IPR027417">
    <property type="entry name" value="P-loop_NTPase"/>
</dbReference>
<dbReference type="NCBIfam" id="TIGR00152">
    <property type="entry name" value="dephospho-CoA kinase"/>
    <property type="match status" value="1"/>
</dbReference>
<dbReference type="PANTHER" id="PTHR10695:SF46">
    <property type="entry name" value="BIFUNCTIONAL COENZYME A SYNTHASE-RELATED"/>
    <property type="match status" value="1"/>
</dbReference>
<dbReference type="PANTHER" id="PTHR10695">
    <property type="entry name" value="DEPHOSPHO-COA KINASE-RELATED"/>
    <property type="match status" value="1"/>
</dbReference>
<dbReference type="Pfam" id="PF01121">
    <property type="entry name" value="CoaE"/>
    <property type="match status" value="1"/>
</dbReference>
<dbReference type="SUPFAM" id="SSF52540">
    <property type="entry name" value="P-loop containing nucleoside triphosphate hydrolases"/>
    <property type="match status" value="1"/>
</dbReference>
<dbReference type="PROSITE" id="PS51219">
    <property type="entry name" value="DPCK"/>
    <property type="match status" value="1"/>
</dbReference>
<sequence>MIIGITGGIASGKSTVVKVIRKAGYQVIDADQVVHDLQEKGGRLYEALREAFGNQILKADGELDRTKLSEMLFSNPDNMATSSAIQNQIIKEELAAKRDHLAQSQAIFFMDIPLLMELGYQDWFDAIWLVYVDAQTQLQRLMARNRLDKGKARQRIASQLPIEEKKPYASLVIDNNGDMETLIKQVQSALLSLANPR</sequence>
<evidence type="ECO:0000255" key="1">
    <source>
        <dbReference type="HAMAP-Rule" id="MF_00376"/>
    </source>
</evidence>
<evidence type="ECO:0000305" key="2"/>
<proteinExistence type="inferred from homology"/>
<gene>
    <name evidence="1" type="primary">coaE</name>
    <name type="ordered locus">SPs1506</name>
</gene>
<protein>
    <recommendedName>
        <fullName evidence="1">Dephospho-CoA kinase</fullName>
        <ecNumber evidence="1">2.7.1.24</ecNumber>
    </recommendedName>
    <alternativeName>
        <fullName evidence="1">Dephosphocoenzyme A kinase</fullName>
    </alternativeName>
</protein>
<accession>P0DA45</accession>
<accession>P63833</accession>
<accession>Q8P249</accession>
<organism>
    <name type="scientific">Streptococcus pyogenes serotype M3 (strain SSI-1)</name>
    <dbReference type="NCBI Taxonomy" id="193567"/>
    <lineage>
        <taxon>Bacteria</taxon>
        <taxon>Bacillati</taxon>
        <taxon>Bacillota</taxon>
        <taxon>Bacilli</taxon>
        <taxon>Lactobacillales</taxon>
        <taxon>Streptococcaceae</taxon>
        <taxon>Streptococcus</taxon>
    </lineage>
</organism>